<comment type="function">
    <text evidence="1">Converts 2C-methyl-D-erythritol 2,4-cyclodiphosphate (ME-2,4cPP) into 1-hydroxy-2-methyl-2-(E)-butenyl 4-diphosphate.</text>
</comment>
<comment type="catalytic activity">
    <reaction evidence="1">
        <text>(2E)-4-hydroxy-3-methylbut-2-enyl diphosphate + oxidized [flavodoxin] + H2O + 2 H(+) = 2-C-methyl-D-erythritol 2,4-cyclic diphosphate + reduced [flavodoxin]</text>
        <dbReference type="Rhea" id="RHEA:43604"/>
        <dbReference type="Rhea" id="RHEA-COMP:10622"/>
        <dbReference type="Rhea" id="RHEA-COMP:10623"/>
        <dbReference type="ChEBI" id="CHEBI:15377"/>
        <dbReference type="ChEBI" id="CHEBI:15378"/>
        <dbReference type="ChEBI" id="CHEBI:57618"/>
        <dbReference type="ChEBI" id="CHEBI:58210"/>
        <dbReference type="ChEBI" id="CHEBI:58483"/>
        <dbReference type="ChEBI" id="CHEBI:128753"/>
        <dbReference type="EC" id="1.17.7.3"/>
    </reaction>
</comment>
<comment type="cofactor">
    <cofactor evidence="1">
        <name>[4Fe-4S] cluster</name>
        <dbReference type="ChEBI" id="CHEBI:49883"/>
    </cofactor>
    <text evidence="1">Binds 1 [4Fe-4S] cluster.</text>
</comment>
<comment type="pathway">
    <text evidence="1">Isoprenoid biosynthesis; isopentenyl diphosphate biosynthesis via DXP pathway; isopentenyl diphosphate from 1-deoxy-D-xylulose 5-phosphate: step 5/6.</text>
</comment>
<comment type="similarity">
    <text evidence="1">Belongs to the IspG family.</text>
</comment>
<dbReference type="EC" id="1.17.7.3" evidence="1"/>
<dbReference type="EMBL" id="AE008923">
    <property type="protein sequence ID" value="AAM36662.1"/>
    <property type="molecule type" value="Genomic_DNA"/>
</dbReference>
<dbReference type="RefSeq" id="WP_011051147.1">
    <property type="nucleotide sequence ID" value="NC_003919.1"/>
</dbReference>
<dbReference type="SMR" id="Q8PLJ8"/>
<dbReference type="GeneID" id="66910946"/>
<dbReference type="KEGG" id="xac:XAC1799"/>
<dbReference type="eggNOG" id="COG0821">
    <property type="taxonomic scope" value="Bacteria"/>
</dbReference>
<dbReference type="HOGENOM" id="CLU_042258_1_0_6"/>
<dbReference type="UniPathway" id="UPA00056">
    <property type="reaction ID" value="UER00096"/>
</dbReference>
<dbReference type="Proteomes" id="UP000000576">
    <property type="component" value="Chromosome"/>
</dbReference>
<dbReference type="GO" id="GO:0051539">
    <property type="term" value="F:4 iron, 4 sulfur cluster binding"/>
    <property type="evidence" value="ECO:0007669"/>
    <property type="project" value="UniProtKB-UniRule"/>
</dbReference>
<dbReference type="GO" id="GO:0046429">
    <property type="term" value="F:4-hydroxy-3-methylbut-2-en-1-yl diphosphate synthase activity (ferredoxin)"/>
    <property type="evidence" value="ECO:0007669"/>
    <property type="project" value="UniProtKB-UniRule"/>
</dbReference>
<dbReference type="GO" id="GO:0141197">
    <property type="term" value="F:4-hydroxy-3-methylbut-2-enyl-diphosphate synthase activity (flavodoxin)"/>
    <property type="evidence" value="ECO:0007669"/>
    <property type="project" value="UniProtKB-EC"/>
</dbReference>
<dbReference type="GO" id="GO:0005506">
    <property type="term" value="F:iron ion binding"/>
    <property type="evidence" value="ECO:0007669"/>
    <property type="project" value="InterPro"/>
</dbReference>
<dbReference type="GO" id="GO:0019288">
    <property type="term" value="P:isopentenyl diphosphate biosynthetic process, methylerythritol 4-phosphate pathway"/>
    <property type="evidence" value="ECO:0007669"/>
    <property type="project" value="UniProtKB-UniRule"/>
</dbReference>
<dbReference type="GO" id="GO:0016114">
    <property type="term" value="P:terpenoid biosynthetic process"/>
    <property type="evidence" value="ECO:0007669"/>
    <property type="project" value="InterPro"/>
</dbReference>
<dbReference type="FunFam" id="3.30.413.10:FF:000012">
    <property type="entry name" value="4-hydroxy-3-methylbut-2-en-1-yl diphosphate synthase (flavodoxin)"/>
    <property type="match status" value="1"/>
</dbReference>
<dbReference type="Gene3D" id="3.20.20.20">
    <property type="entry name" value="Dihydropteroate synthase-like"/>
    <property type="match status" value="1"/>
</dbReference>
<dbReference type="Gene3D" id="3.30.413.10">
    <property type="entry name" value="Sulfite Reductase Hemoprotein, domain 1"/>
    <property type="match status" value="1"/>
</dbReference>
<dbReference type="HAMAP" id="MF_00159">
    <property type="entry name" value="IspG"/>
    <property type="match status" value="1"/>
</dbReference>
<dbReference type="InterPro" id="IPR011005">
    <property type="entry name" value="Dihydropteroate_synth-like_sf"/>
</dbReference>
<dbReference type="InterPro" id="IPR016425">
    <property type="entry name" value="IspG_bac"/>
</dbReference>
<dbReference type="InterPro" id="IPR004588">
    <property type="entry name" value="IspG_bac-typ"/>
</dbReference>
<dbReference type="InterPro" id="IPR045854">
    <property type="entry name" value="NO2/SO3_Rdtase_4Fe4S_sf"/>
</dbReference>
<dbReference type="NCBIfam" id="TIGR00612">
    <property type="entry name" value="ispG_gcpE"/>
    <property type="match status" value="1"/>
</dbReference>
<dbReference type="NCBIfam" id="NF001540">
    <property type="entry name" value="PRK00366.1"/>
    <property type="match status" value="1"/>
</dbReference>
<dbReference type="PANTHER" id="PTHR30454">
    <property type="entry name" value="4-HYDROXY-3-METHYLBUT-2-EN-1-YL DIPHOSPHATE SYNTHASE"/>
    <property type="match status" value="1"/>
</dbReference>
<dbReference type="PANTHER" id="PTHR30454:SF0">
    <property type="entry name" value="4-HYDROXY-3-METHYLBUT-2-EN-1-YL DIPHOSPHATE SYNTHASE (FERREDOXIN), CHLOROPLASTIC"/>
    <property type="match status" value="1"/>
</dbReference>
<dbReference type="Pfam" id="PF04551">
    <property type="entry name" value="GcpE"/>
    <property type="match status" value="1"/>
</dbReference>
<dbReference type="PIRSF" id="PIRSF004640">
    <property type="entry name" value="IspG"/>
    <property type="match status" value="1"/>
</dbReference>
<name>ISPG_XANAC</name>
<protein>
    <recommendedName>
        <fullName evidence="1">4-hydroxy-3-methylbut-2-en-1-yl diphosphate synthase (flavodoxin)</fullName>
        <ecNumber evidence="1">1.17.7.3</ecNumber>
    </recommendedName>
    <alternativeName>
        <fullName evidence="1">1-hydroxy-2-methyl-2-(E)-butenyl 4-diphosphate synthase</fullName>
    </alternativeName>
</protein>
<reference key="1">
    <citation type="journal article" date="2002" name="Nature">
        <title>Comparison of the genomes of two Xanthomonas pathogens with differing host specificities.</title>
        <authorList>
            <person name="da Silva A.C.R."/>
            <person name="Ferro J.A."/>
            <person name="Reinach F.C."/>
            <person name="Farah C.S."/>
            <person name="Furlan L.R."/>
            <person name="Quaggio R.B."/>
            <person name="Monteiro-Vitorello C.B."/>
            <person name="Van Sluys M.A."/>
            <person name="Almeida N.F. Jr."/>
            <person name="Alves L.M.C."/>
            <person name="do Amaral A.M."/>
            <person name="Bertolini M.C."/>
            <person name="Camargo L.E.A."/>
            <person name="Camarotte G."/>
            <person name="Cannavan F."/>
            <person name="Cardozo J."/>
            <person name="Chambergo F."/>
            <person name="Ciapina L.P."/>
            <person name="Cicarelli R.M.B."/>
            <person name="Coutinho L.L."/>
            <person name="Cursino-Santos J.R."/>
            <person name="El-Dorry H."/>
            <person name="Faria J.B."/>
            <person name="Ferreira A.J.S."/>
            <person name="Ferreira R.C.C."/>
            <person name="Ferro M.I.T."/>
            <person name="Formighieri E.F."/>
            <person name="Franco M.C."/>
            <person name="Greggio C.C."/>
            <person name="Gruber A."/>
            <person name="Katsuyama A.M."/>
            <person name="Kishi L.T."/>
            <person name="Leite R.P."/>
            <person name="Lemos E.G.M."/>
            <person name="Lemos M.V.F."/>
            <person name="Locali E.C."/>
            <person name="Machado M.A."/>
            <person name="Madeira A.M.B.N."/>
            <person name="Martinez-Rossi N.M."/>
            <person name="Martins E.C."/>
            <person name="Meidanis J."/>
            <person name="Menck C.F.M."/>
            <person name="Miyaki C.Y."/>
            <person name="Moon D.H."/>
            <person name="Moreira L.M."/>
            <person name="Novo M.T.M."/>
            <person name="Okura V.K."/>
            <person name="Oliveira M.C."/>
            <person name="Oliveira V.R."/>
            <person name="Pereira H.A."/>
            <person name="Rossi A."/>
            <person name="Sena J.A.D."/>
            <person name="Silva C."/>
            <person name="de Souza R.F."/>
            <person name="Spinola L.A.F."/>
            <person name="Takita M.A."/>
            <person name="Tamura R.E."/>
            <person name="Teixeira E.C."/>
            <person name="Tezza R.I.D."/>
            <person name="Trindade dos Santos M."/>
            <person name="Truffi D."/>
            <person name="Tsai S.M."/>
            <person name="White F.F."/>
            <person name="Setubal J.C."/>
            <person name="Kitajima J.P."/>
        </authorList>
    </citation>
    <scope>NUCLEOTIDE SEQUENCE [LARGE SCALE GENOMIC DNA]</scope>
    <source>
        <strain>306</strain>
    </source>
</reference>
<accession>Q8PLJ8</accession>
<gene>
    <name evidence="1" type="primary">ispG</name>
    <name type="ordered locus">XAC1799</name>
</gene>
<organism>
    <name type="scientific">Xanthomonas axonopodis pv. citri (strain 306)</name>
    <dbReference type="NCBI Taxonomy" id="190486"/>
    <lineage>
        <taxon>Bacteria</taxon>
        <taxon>Pseudomonadati</taxon>
        <taxon>Pseudomonadota</taxon>
        <taxon>Gammaproteobacteria</taxon>
        <taxon>Lysobacterales</taxon>
        <taxon>Lysobacteraceae</taxon>
        <taxon>Xanthomonas</taxon>
    </lineage>
</organism>
<keyword id="KW-0004">4Fe-4S</keyword>
<keyword id="KW-0408">Iron</keyword>
<keyword id="KW-0411">Iron-sulfur</keyword>
<keyword id="KW-0414">Isoprene biosynthesis</keyword>
<keyword id="KW-0479">Metal-binding</keyword>
<keyword id="KW-0560">Oxidoreductase</keyword>
<proteinExistence type="inferred from homology"/>
<feature type="chain" id="PRO_0000190660" description="4-hydroxy-3-methylbut-2-en-1-yl diphosphate synthase (flavodoxin)">
    <location>
        <begin position="1"/>
        <end position="421"/>
    </location>
</feature>
<feature type="binding site" evidence="1">
    <location>
        <position position="311"/>
    </location>
    <ligand>
        <name>[4Fe-4S] cluster</name>
        <dbReference type="ChEBI" id="CHEBI:49883"/>
    </ligand>
</feature>
<feature type="binding site" evidence="1">
    <location>
        <position position="314"/>
    </location>
    <ligand>
        <name>[4Fe-4S] cluster</name>
        <dbReference type="ChEBI" id="CHEBI:49883"/>
    </ligand>
</feature>
<feature type="binding site" evidence="1">
    <location>
        <position position="357"/>
    </location>
    <ligand>
        <name>[4Fe-4S] cluster</name>
        <dbReference type="ChEBI" id="CHEBI:49883"/>
    </ligand>
</feature>
<feature type="binding site" evidence="1">
    <location>
        <position position="364"/>
    </location>
    <ligand>
        <name>[4Fe-4S] cluster</name>
        <dbReference type="ChEBI" id="CHEBI:49883"/>
    </ligand>
</feature>
<sequence length="421" mass="45173">MHDAVTRPTPPADATAWPRRITRAVKIGSVTVGGGHPVVVQSMTNTDTADIAGSVKQVADLWRAGSEMVRLTVNNAESAAAIPRIVDKLRMMGIEVPLIGDFHYNGHQLLAAEPACAEALAKYRINPGNVGFGKKKDLQFGQLIEFAIKYGKPVRIGANWGSLDQSLAAQLMDENSQRDTPWDAGRVLREALIRSAVDSAERAVELGLPRERIILSAKVSGVQELIAVYRDMASRCDFALHLGLTEAGIGSKGIVASAAALSVLLQEGIGDTIRISLTPEPGQSRTQEVVVAQELLQTTGQRAFTPMVTACPGCGRTTSEFFQELAGVVQNHVRAKMPEWKITNPGAENMTLAVMGCVVNGPGESRHANIGISLPGTGEAPSAPVFIDGEKSVTLRGENIAYEFIELIDQYVERTYVRRAG</sequence>
<evidence type="ECO:0000255" key="1">
    <source>
        <dbReference type="HAMAP-Rule" id="MF_00159"/>
    </source>
</evidence>